<name>COBQ_MYCTU</name>
<sequence>MSGLLVAGTTSDAGKSAVTAGLCRALARRGVRVAPFKAQNMSNNSMVCRGPDGTGVEIGRAQWVQALAARTTPEAAMNPVLLKPASDHRSHVVLMGKPWGEVASSSWCAGRRALAEAACRAFDALAARYDVVVAEGAGSPAEINLRAGDYVNMGLARHAGLPTIVVGDIDRGGVFAAFLGTVALLAAEDQALVAGFVVNKFRGDSDLLAPGLRDLERVTGRRVYGTLPWHPDLWLDSEDALDLQGRRAAGTGARRVAVVRLPRISNFTDVDALGLEPDLDVVFASDPRALDDADLIVLPGTRATIADLAWLRARDLDRALLVHVAAGKPLLGICGGFQMLGRVIRDPYGIEGPGGQVTEVEGLGLLDVETAFSPHKVLRLPRGEGLGVPASGYEIHHGRITRGDTAEEFLGGARDGPVFGTMWHGSLEGDALREAFLRETLGLAPSGSCFLAARERRLDLLGDLVERHLDVDALLNLARHGCPPTLPFLAPGAP</sequence>
<organism>
    <name type="scientific">Mycobacterium tuberculosis (strain ATCC 25618 / H37Rv)</name>
    <dbReference type="NCBI Taxonomy" id="83332"/>
    <lineage>
        <taxon>Bacteria</taxon>
        <taxon>Bacillati</taxon>
        <taxon>Actinomycetota</taxon>
        <taxon>Actinomycetes</taxon>
        <taxon>Mycobacteriales</taxon>
        <taxon>Mycobacteriaceae</taxon>
        <taxon>Mycobacterium</taxon>
        <taxon>Mycobacterium tuberculosis complex</taxon>
    </lineage>
</organism>
<keyword id="KW-0169">Cobalamin biosynthesis</keyword>
<keyword id="KW-0315">Glutamine amidotransferase</keyword>
<keyword id="KW-1185">Reference proteome</keyword>
<proteinExistence type="evidence at protein level"/>
<evidence type="ECO:0000250" key="1"/>
<evidence type="ECO:0000305" key="2"/>
<protein>
    <recommendedName>
        <fullName>Cobyric acid synthase</fullName>
    </recommendedName>
</protein>
<reference key="1">
    <citation type="journal article" date="1998" name="Nature">
        <title>Deciphering the biology of Mycobacterium tuberculosis from the complete genome sequence.</title>
        <authorList>
            <person name="Cole S.T."/>
            <person name="Brosch R."/>
            <person name="Parkhill J."/>
            <person name="Garnier T."/>
            <person name="Churcher C.M."/>
            <person name="Harris D.E."/>
            <person name="Gordon S.V."/>
            <person name="Eiglmeier K."/>
            <person name="Gas S."/>
            <person name="Barry C.E. III"/>
            <person name="Tekaia F."/>
            <person name="Badcock K."/>
            <person name="Basham D."/>
            <person name="Brown D."/>
            <person name="Chillingworth T."/>
            <person name="Connor R."/>
            <person name="Davies R.M."/>
            <person name="Devlin K."/>
            <person name="Feltwell T."/>
            <person name="Gentles S."/>
            <person name="Hamlin N."/>
            <person name="Holroyd S."/>
            <person name="Hornsby T."/>
            <person name="Jagels K."/>
            <person name="Krogh A."/>
            <person name="McLean J."/>
            <person name="Moule S."/>
            <person name="Murphy L.D."/>
            <person name="Oliver S."/>
            <person name="Osborne J."/>
            <person name="Quail M.A."/>
            <person name="Rajandream M.A."/>
            <person name="Rogers J."/>
            <person name="Rutter S."/>
            <person name="Seeger K."/>
            <person name="Skelton S."/>
            <person name="Squares S."/>
            <person name="Squares R."/>
            <person name="Sulston J.E."/>
            <person name="Taylor K."/>
            <person name="Whitehead S."/>
            <person name="Barrell B.G."/>
        </authorList>
    </citation>
    <scope>NUCLEOTIDE SEQUENCE [LARGE SCALE GENOMIC DNA]</scope>
    <source>
        <strain>ATCC 25618 / H37Rv</strain>
    </source>
</reference>
<reference key="2">
    <citation type="journal article" date="2011" name="Mol. Cell. Proteomics">
        <title>Proteogenomic analysis of Mycobacterium tuberculosis by high resolution mass spectrometry.</title>
        <authorList>
            <person name="Kelkar D.S."/>
            <person name="Kumar D."/>
            <person name="Kumar P."/>
            <person name="Balakrishnan L."/>
            <person name="Muthusamy B."/>
            <person name="Yadav A.K."/>
            <person name="Shrivastava P."/>
            <person name="Marimuthu A."/>
            <person name="Anand S."/>
            <person name="Sundaram H."/>
            <person name="Kingsbury R."/>
            <person name="Harsha H.C."/>
            <person name="Nair B."/>
            <person name="Prasad T.S."/>
            <person name="Chauhan D.S."/>
            <person name="Katoch K."/>
            <person name="Katoch V.M."/>
            <person name="Kumar P."/>
            <person name="Chaerkady R."/>
            <person name="Ramachandran S."/>
            <person name="Dash D."/>
            <person name="Pandey A."/>
        </authorList>
    </citation>
    <scope>IDENTIFICATION BY MASS SPECTROMETRY [LARGE SCALE ANALYSIS]</scope>
    <source>
        <strain>ATCC 25618 / H37Rv</strain>
    </source>
</reference>
<dbReference type="EMBL" id="AL123456">
    <property type="protein sequence ID" value="CCP42984.1"/>
    <property type="molecule type" value="Genomic_DNA"/>
</dbReference>
<dbReference type="PIR" id="C70940">
    <property type="entry name" value="C70940"/>
</dbReference>
<dbReference type="RefSeq" id="WP_003899877.1">
    <property type="nucleotide sequence ID" value="NZ_NVQJ01000001.1"/>
</dbReference>
<dbReference type="RefSeq" id="YP_177703.1">
    <property type="nucleotide sequence ID" value="NC_000962.3"/>
</dbReference>
<dbReference type="FunCoup" id="P9WP95">
    <property type="interactions" value="132"/>
</dbReference>
<dbReference type="STRING" id="83332.Rv0255c"/>
<dbReference type="PaxDb" id="83332-Rv0255c"/>
<dbReference type="DNASU" id="886673"/>
<dbReference type="GeneID" id="886673"/>
<dbReference type="KEGG" id="mtu:Rv0255c"/>
<dbReference type="KEGG" id="mtv:RVBD_0255c"/>
<dbReference type="TubercuList" id="Rv0255c"/>
<dbReference type="eggNOG" id="COG1492">
    <property type="taxonomic scope" value="Bacteria"/>
</dbReference>
<dbReference type="InParanoid" id="P9WP95"/>
<dbReference type="OrthoDB" id="9808302at2"/>
<dbReference type="PhylomeDB" id="P9WP95"/>
<dbReference type="UniPathway" id="UPA00148"/>
<dbReference type="Proteomes" id="UP000001584">
    <property type="component" value="Chromosome"/>
</dbReference>
<dbReference type="GO" id="GO:0015420">
    <property type="term" value="F:ABC-type vitamin B12 transporter activity"/>
    <property type="evidence" value="ECO:0007669"/>
    <property type="project" value="UniProtKB-UniRule"/>
</dbReference>
<dbReference type="GO" id="GO:0003824">
    <property type="term" value="F:catalytic activity"/>
    <property type="evidence" value="ECO:0007669"/>
    <property type="project" value="InterPro"/>
</dbReference>
<dbReference type="GO" id="GO:0009236">
    <property type="term" value="P:cobalamin biosynthetic process"/>
    <property type="evidence" value="ECO:0007669"/>
    <property type="project" value="UniProtKB-UniRule"/>
</dbReference>
<dbReference type="CDD" id="cd05389">
    <property type="entry name" value="CobQ_N"/>
    <property type="match status" value="1"/>
</dbReference>
<dbReference type="CDD" id="cd01750">
    <property type="entry name" value="GATase1_CobQ"/>
    <property type="match status" value="1"/>
</dbReference>
<dbReference type="Gene3D" id="3.40.50.880">
    <property type="match status" value="1"/>
</dbReference>
<dbReference type="Gene3D" id="3.40.50.300">
    <property type="entry name" value="P-loop containing nucleotide triphosphate hydrolases"/>
    <property type="match status" value="1"/>
</dbReference>
<dbReference type="HAMAP" id="MF_00028">
    <property type="entry name" value="CobQ"/>
    <property type="match status" value="1"/>
</dbReference>
<dbReference type="InterPro" id="IPR029062">
    <property type="entry name" value="Class_I_gatase-like"/>
</dbReference>
<dbReference type="InterPro" id="IPR002586">
    <property type="entry name" value="CobQ/CobB/MinD/ParA_Nub-bd_dom"/>
</dbReference>
<dbReference type="InterPro" id="IPR033949">
    <property type="entry name" value="CobQ_GATase1"/>
</dbReference>
<dbReference type="InterPro" id="IPR047045">
    <property type="entry name" value="CobQ_N"/>
</dbReference>
<dbReference type="InterPro" id="IPR004459">
    <property type="entry name" value="CobQ_synth"/>
</dbReference>
<dbReference type="InterPro" id="IPR011698">
    <property type="entry name" value="GATase_3"/>
</dbReference>
<dbReference type="InterPro" id="IPR027417">
    <property type="entry name" value="P-loop_NTPase"/>
</dbReference>
<dbReference type="NCBIfam" id="TIGR00313">
    <property type="entry name" value="cobQ"/>
    <property type="match status" value="1"/>
</dbReference>
<dbReference type="NCBIfam" id="NF001989">
    <property type="entry name" value="PRK00784.1"/>
    <property type="match status" value="1"/>
</dbReference>
<dbReference type="PANTHER" id="PTHR21343:SF1">
    <property type="entry name" value="COBYRIC ACID SYNTHASE"/>
    <property type="match status" value="1"/>
</dbReference>
<dbReference type="PANTHER" id="PTHR21343">
    <property type="entry name" value="DETHIOBIOTIN SYNTHETASE"/>
    <property type="match status" value="1"/>
</dbReference>
<dbReference type="Pfam" id="PF01656">
    <property type="entry name" value="CbiA"/>
    <property type="match status" value="1"/>
</dbReference>
<dbReference type="Pfam" id="PF07685">
    <property type="entry name" value="GATase_3"/>
    <property type="match status" value="1"/>
</dbReference>
<dbReference type="SUPFAM" id="SSF52317">
    <property type="entry name" value="Class I glutamine amidotransferase-like"/>
    <property type="match status" value="1"/>
</dbReference>
<dbReference type="SUPFAM" id="SSF52540">
    <property type="entry name" value="P-loop containing nucleoside triphosphate hydrolases"/>
    <property type="match status" value="1"/>
</dbReference>
<dbReference type="PROSITE" id="PS51274">
    <property type="entry name" value="GATASE_COBBQ"/>
    <property type="match status" value="1"/>
</dbReference>
<comment type="function">
    <text evidence="1">Catalyzes amidations at positions B, D, E, and G on adenosylcobyrinic A,C-diamide. NH(2) groups are provided by glutamine, and one molecule of ATP is hydrogenolyzed for each amidation (By similarity).</text>
</comment>
<comment type="pathway">
    <text>Cofactor biosynthesis; adenosylcobalamin biosynthesis.</text>
</comment>
<comment type="similarity">
    <text evidence="2">Belongs to the CobB/CobQ family. CobQ subfamily.</text>
</comment>
<feature type="chain" id="PRO_0000141312" description="Cobyric acid synthase">
    <location>
        <begin position="1"/>
        <end position="494"/>
    </location>
</feature>
<feature type="domain" description="GATase cobBQ-type">
    <location>
        <begin position="253"/>
        <end position="432"/>
    </location>
</feature>
<feature type="active site" description="Nucleophile" evidence="1">
    <location>
        <position position="334"/>
    </location>
</feature>
<feature type="active site" evidence="1">
    <location>
        <position position="424"/>
    </location>
</feature>
<accession>P9WP95</accession>
<accession>L0T2Z2</accession>
<accession>O53677</accession>
<accession>P0A532</accession>
<gene>
    <name type="primary">cobQ</name>
    <name type="synonym">cbiP</name>
    <name type="ordered locus">Rv0255c</name>
    <name type="ORF">MTV034.21c</name>
</gene>